<dbReference type="EC" id="2.8.1.13" evidence="1"/>
<dbReference type="EMBL" id="CP000951">
    <property type="protein sequence ID" value="ACB00685.1"/>
    <property type="status" value="ALT_INIT"/>
    <property type="molecule type" value="Genomic_DNA"/>
</dbReference>
<dbReference type="RefSeq" id="WP_041443663.1">
    <property type="nucleotide sequence ID" value="NZ_JAHHPU010000003.1"/>
</dbReference>
<dbReference type="SMR" id="B1XM11"/>
<dbReference type="STRING" id="32049.SYNPCC7002_A2709"/>
<dbReference type="KEGG" id="syp:SYNPCC7002_A2709"/>
<dbReference type="eggNOG" id="COG0482">
    <property type="taxonomic scope" value="Bacteria"/>
</dbReference>
<dbReference type="HOGENOM" id="CLU_035188_0_0_3"/>
<dbReference type="Proteomes" id="UP000001688">
    <property type="component" value="Chromosome"/>
</dbReference>
<dbReference type="GO" id="GO:0005737">
    <property type="term" value="C:cytoplasm"/>
    <property type="evidence" value="ECO:0007669"/>
    <property type="project" value="UniProtKB-SubCell"/>
</dbReference>
<dbReference type="GO" id="GO:0005524">
    <property type="term" value="F:ATP binding"/>
    <property type="evidence" value="ECO:0007669"/>
    <property type="project" value="UniProtKB-KW"/>
</dbReference>
<dbReference type="GO" id="GO:0000049">
    <property type="term" value="F:tRNA binding"/>
    <property type="evidence" value="ECO:0007669"/>
    <property type="project" value="UniProtKB-KW"/>
</dbReference>
<dbReference type="GO" id="GO:0103016">
    <property type="term" value="F:tRNA-uridine 2-sulfurtransferase activity"/>
    <property type="evidence" value="ECO:0007669"/>
    <property type="project" value="UniProtKB-EC"/>
</dbReference>
<dbReference type="GO" id="GO:0002143">
    <property type="term" value="P:tRNA wobble position uridine thiolation"/>
    <property type="evidence" value="ECO:0007669"/>
    <property type="project" value="TreeGrafter"/>
</dbReference>
<dbReference type="CDD" id="cd01998">
    <property type="entry name" value="MnmA_TRMU-like"/>
    <property type="match status" value="1"/>
</dbReference>
<dbReference type="FunFam" id="2.30.30.280:FF:000001">
    <property type="entry name" value="tRNA-specific 2-thiouridylase MnmA"/>
    <property type="match status" value="1"/>
</dbReference>
<dbReference type="FunFam" id="2.40.30.10:FF:000023">
    <property type="entry name" value="tRNA-specific 2-thiouridylase MnmA"/>
    <property type="match status" value="1"/>
</dbReference>
<dbReference type="FunFam" id="3.40.50.620:FF:000302">
    <property type="entry name" value="tRNA-specific 2-thiouridylase MnmA"/>
    <property type="match status" value="1"/>
</dbReference>
<dbReference type="Gene3D" id="2.30.30.280">
    <property type="entry name" value="Adenine nucleotide alpha hydrolases-like domains"/>
    <property type="match status" value="1"/>
</dbReference>
<dbReference type="Gene3D" id="3.40.50.620">
    <property type="entry name" value="HUPs"/>
    <property type="match status" value="1"/>
</dbReference>
<dbReference type="Gene3D" id="2.40.30.10">
    <property type="entry name" value="Translation factors"/>
    <property type="match status" value="1"/>
</dbReference>
<dbReference type="HAMAP" id="MF_00144">
    <property type="entry name" value="tRNA_thiouridyl_MnmA"/>
    <property type="match status" value="1"/>
</dbReference>
<dbReference type="InterPro" id="IPR004506">
    <property type="entry name" value="MnmA-like"/>
</dbReference>
<dbReference type="InterPro" id="IPR046885">
    <property type="entry name" value="MnmA-like_C"/>
</dbReference>
<dbReference type="InterPro" id="IPR046884">
    <property type="entry name" value="MnmA-like_central"/>
</dbReference>
<dbReference type="InterPro" id="IPR023382">
    <property type="entry name" value="MnmA-like_central_sf"/>
</dbReference>
<dbReference type="InterPro" id="IPR014729">
    <property type="entry name" value="Rossmann-like_a/b/a_fold"/>
</dbReference>
<dbReference type="NCBIfam" id="NF001138">
    <property type="entry name" value="PRK00143.1"/>
    <property type="match status" value="1"/>
</dbReference>
<dbReference type="NCBIfam" id="TIGR00420">
    <property type="entry name" value="trmU"/>
    <property type="match status" value="1"/>
</dbReference>
<dbReference type="PANTHER" id="PTHR11933:SF5">
    <property type="entry name" value="MITOCHONDRIAL TRNA-SPECIFIC 2-THIOURIDYLASE 1"/>
    <property type="match status" value="1"/>
</dbReference>
<dbReference type="PANTHER" id="PTHR11933">
    <property type="entry name" value="TRNA 5-METHYLAMINOMETHYL-2-THIOURIDYLATE -METHYLTRANSFERASE"/>
    <property type="match status" value="1"/>
</dbReference>
<dbReference type="Pfam" id="PF03054">
    <property type="entry name" value="tRNA_Me_trans"/>
    <property type="match status" value="1"/>
</dbReference>
<dbReference type="Pfam" id="PF20258">
    <property type="entry name" value="tRNA_Me_trans_C"/>
    <property type="match status" value="1"/>
</dbReference>
<dbReference type="Pfam" id="PF20259">
    <property type="entry name" value="tRNA_Me_trans_M"/>
    <property type="match status" value="1"/>
</dbReference>
<dbReference type="SUPFAM" id="SSF52402">
    <property type="entry name" value="Adenine nucleotide alpha hydrolases-like"/>
    <property type="match status" value="1"/>
</dbReference>
<sequence length="353" mass="38872">MGKVAVGLSGGVDSSVTAGILHRQGYTVEGVTLWLMKGKGQCCSEGMVDAADICEQLGIPHHIVDSRDLFQKYIVDYVVSGYEVGVTPLPCSQCNRMVKFGPMLQWAKAELGIDQIATGHYARIRYNDQTGRYELLRAVDRHKDQSYFLYDLTQEMLAGTLFPLGEMTKGETRQIAAEMQLSTAKKPESQDLCLIEAHGSMKTFLDKYIEQREGEIVDLDGKVLGHHTGIHHYTIGQRKGLGIAAPEPLYVVKLDNVMNRVVVSTRDRAGQSECTVQRMNWLALPGITSPIRAEVQVRYRSGAVPVTVIPLEGDRLKLVFEEPQFGITPGQAAVLYDGDRVLGGGIIEHPEAA</sequence>
<accession>B1XM11</accession>
<evidence type="ECO:0000255" key="1">
    <source>
        <dbReference type="HAMAP-Rule" id="MF_00144"/>
    </source>
</evidence>
<evidence type="ECO:0000305" key="2"/>
<reference key="1">
    <citation type="submission" date="2008-02" db="EMBL/GenBank/DDBJ databases">
        <title>Complete sequence of Synechococcus sp. PCC 7002.</title>
        <authorList>
            <person name="Li T."/>
            <person name="Zhao J."/>
            <person name="Zhao C."/>
            <person name="Liu Z."/>
            <person name="Zhao F."/>
            <person name="Marquardt J."/>
            <person name="Nomura C.T."/>
            <person name="Persson S."/>
            <person name="Detter J.C."/>
            <person name="Richardson P.M."/>
            <person name="Lanz C."/>
            <person name="Schuster S.C."/>
            <person name="Wang J."/>
            <person name="Li S."/>
            <person name="Huang X."/>
            <person name="Cai T."/>
            <person name="Yu Z."/>
            <person name="Luo J."/>
            <person name="Zhao J."/>
            <person name="Bryant D.A."/>
        </authorList>
    </citation>
    <scope>NUCLEOTIDE SEQUENCE [LARGE SCALE GENOMIC DNA]</scope>
    <source>
        <strain>ATCC 27264 / PCC 7002 / PR-6</strain>
    </source>
</reference>
<feature type="chain" id="PRO_0000349825" description="tRNA-specific 2-thiouridylase MnmA">
    <location>
        <begin position="1"/>
        <end position="353"/>
    </location>
</feature>
<feature type="region of interest" description="Interaction with tRNA" evidence="1">
    <location>
        <begin position="143"/>
        <end position="145"/>
    </location>
</feature>
<feature type="region of interest" description="Interaction with tRNA" evidence="1">
    <location>
        <begin position="298"/>
        <end position="299"/>
    </location>
</feature>
<feature type="active site" description="Nucleophile" evidence="1">
    <location>
        <position position="94"/>
    </location>
</feature>
<feature type="active site" description="Cysteine persulfide intermediate" evidence="1">
    <location>
        <position position="193"/>
    </location>
</feature>
<feature type="binding site" evidence="1">
    <location>
        <begin position="7"/>
        <end position="14"/>
    </location>
    <ligand>
        <name>ATP</name>
        <dbReference type="ChEBI" id="CHEBI:30616"/>
    </ligand>
</feature>
<feature type="binding site" evidence="1">
    <location>
        <position position="33"/>
    </location>
    <ligand>
        <name>ATP</name>
        <dbReference type="ChEBI" id="CHEBI:30616"/>
    </ligand>
</feature>
<feature type="binding site" evidence="1">
    <location>
        <position position="119"/>
    </location>
    <ligand>
        <name>ATP</name>
        <dbReference type="ChEBI" id="CHEBI:30616"/>
    </ligand>
</feature>
<feature type="site" description="Interaction with tRNA" evidence="1">
    <location>
        <position position="120"/>
    </location>
</feature>
<feature type="site" description="Interaction with tRNA" evidence="1">
    <location>
        <position position="331"/>
    </location>
</feature>
<feature type="disulfide bond" description="Alternate" evidence="1">
    <location>
        <begin position="94"/>
        <end position="193"/>
    </location>
</feature>
<keyword id="KW-0067">ATP-binding</keyword>
<keyword id="KW-0963">Cytoplasm</keyword>
<keyword id="KW-1015">Disulfide bond</keyword>
<keyword id="KW-0547">Nucleotide-binding</keyword>
<keyword id="KW-1185">Reference proteome</keyword>
<keyword id="KW-0694">RNA-binding</keyword>
<keyword id="KW-0808">Transferase</keyword>
<keyword id="KW-0819">tRNA processing</keyword>
<keyword id="KW-0820">tRNA-binding</keyword>
<name>MNMA_PICP2</name>
<organism>
    <name type="scientific">Picosynechococcus sp. (strain ATCC 27264 / PCC 7002 / PR-6)</name>
    <name type="common">Agmenellum quadruplicatum</name>
    <dbReference type="NCBI Taxonomy" id="32049"/>
    <lineage>
        <taxon>Bacteria</taxon>
        <taxon>Bacillati</taxon>
        <taxon>Cyanobacteriota</taxon>
        <taxon>Cyanophyceae</taxon>
        <taxon>Oscillatoriophycideae</taxon>
        <taxon>Chroococcales</taxon>
        <taxon>Geminocystaceae</taxon>
        <taxon>Picosynechococcus</taxon>
    </lineage>
</organism>
<gene>
    <name evidence="1" type="primary">mnmA</name>
    <name type="ordered locus">SYNPCC7002_A2709</name>
</gene>
<comment type="function">
    <text evidence="1">Catalyzes the 2-thiolation of uridine at the wobble position (U34) of tRNA, leading to the formation of s(2)U34.</text>
</comment>
<comment type="catalytic activity">
    <reaction evidence="1">
        <text>S-sulfanyl-L-cysteinyl-[protein] + uridine(34) in tRNA + AH2 + ATP = 2-thiouridine(34) in tRNA + L-cysteinyl-[protein] + A + AMP + diphosphate + H(+)</text>
        <dbReference type="Rhea" id="RHEA:47032"/>
        <dbReference type="Rhea" id="RHEA-COMP:10131"/>
        <dbReference type="Rhea" id="RHEA-COMP:11726"/>
        <dbReference type="Rhea" id="RHEA-COMP:11727"/>
        <dbReference type="Rhea" id="RHEA-COMP:11728"/>
        <dbReference type="ChEBI" id="CHEBI:13193"/>
        <dbReference type="ChEBI" id="CHEBI:15378"/>
        <dbReference type="ChEBI" id="CHEBI:17499"/>
        <dbReference type="ChEBI" id="CHEBI:29950"/>
        <dbReference type="ChEBI" id="CHEBI:30616"/>
        <dbReference type="ChEBI" id="CHEBI:33019"/>
        <dbReference type="ChEBI" id="CHEBI:61963"/>
        <dbReference type="ChEBI" id="CHEBI:65315"/>
        <dbReference type="ChEBI" id="CHEBI:87170"/>
        <dbReference type="ChEBI" id="CHEBI:456215"/>
        <dbReference type="EC" id="2.8.1.13"/>
    </reaction>
</comment>
<comment type="subcellular location">
    <subcellularLocation>
        <location evidence="1">Cytoplasm</location>
    </subcellularLocation>
</comment>
<comment type="similarity">
    <text evidence="1">Belongs to the MnmA/TRMU family.</text>
</comment>
<comment type="sequence caution" evidence="2">
    <conflict type="erroneous initiation">
        <sequence resource="EMBL-CDS" id="ACB00685"/>
    </conflict>
</comment>
<proteinExistence type="inferred from homology"/>
<protein>
    <recommendedName>
        <fullName evidence="1">tRNA-specific 2-thiouridylase MnmA</fullName>
        <ecNumber evidence="1">2.8.1.13</ecNumber>
    </recommendedName>
</protein>